<dbReference type="SMR" id="P0DMW6"/>
<dbReference type="EnsemblMetazoa" id="EGACTEQ4350017687-RA">
    <property type="protein sequence ID" value="EGACTEQ4350017687-PA"/>
    <property type="gene ID" value="EGACTEQ4350017687"/>
</dbReference>
<dbReference type="OrthoDB" id="5950222at2759"/>
<dbReference type="GO" id="GO:0005615">
    <property type="term" value="C:extracellular space"/>
    <property type="evidence" value="ECO:0007669"/>
    <property type="project" value="TreeGrafter"/>
</dbReference>
<dbReference type="GO" id="GO:0042151">
    <property type="term" value="C:nematocyst"/>
    <property type="evidence" value="ECO:0007669"/>
    <property type="project" value="UniProtKB-SubCell"/>
</dbReference>
<dbReference type="GO" id="GO:0015459">
    <property type="term" value="F:potassium channel regulator activity"/>
    <property type="evidence" value="ECO:0007669"/>
    <property type="project" value="UniProtKB-KW"/>
</dbReference>
<dbReference type="GO" id="GO:0004867">
    <property type="term" value="F:serine-type endopeptidase inhibitor activity"/>
    <property type="evidence" value="ECO:0007669"/>
    <property type="project" value="UniProtKB-KW"/>
</dbReference>
<dbReference type="GO" id="GO:0090729">
    <property type="term" value="F:toxin activity"/>
    <property type="evidence" value="ECO:0007669"/>
    <property type="project" value="UniProtKB-KW"/>
</dbReference>
<dbReference type="CDD" id="cd00109">
    <property type="entry name" value="Kunitz-type"/>
    <property type="match status" value="1"/>
</dbReference>
<dbReference type="FunFam" id="4.10.410.10:FF:000021">
    <property type="entry name" value="Serine protease inhibitor, putative"/>
    <property type="match status" value="1"/>
</dbReference>
<dbReference type="Gene3D" id="4.10.410.10">
    <property type="entry name" value="Pancreatic trypsin inhibitor Kunitz domain"/>
    <property type="match status" value="1"/>
</dbReference>
<dbReference type="InterPro" id="IPR002223">
    <property type="entry name" value="Kunitz_BPTI"/>
</dbReference>
<dbReference type="InterPro" id="IPR036880">
    <property type="entry name" value="Kunitz_BPTI_sf"/>
</dbReference>
<dbReference type="InterPro" id="IPR020901">
    <property type="entry name" value="Prtase_inh_Kunz-CS"/>
</dbReference>
<dbReference type="InterPro" id="IPR050098">
    <property type="entry name" value="TFPI/VKTCI-like"/>
</dbReference>
<dbReference type="PANTHER" id="PTHR10083">
    <property type="entry name" value="KUNITZ-TYPE PROTEASE INHIBITOR-RELATED"/>
    <property type="match status" value="1"/>
</dbReference>
<dbReference type="PANTHER" id="PTHR10083:SF328">
    <property type="entry name" value="TISSUE FACTOR PATHWAY INHIBITOR"/>
    <property type="match status" value="1"/>
</dbReference>
<dbReference type="Pfam" id="PF00014">
    <property type="entry name" value="Kunitz_BPTI"/>
    <property type="match status" value="1"/>
</dbReference>
<dbReference type="PRINTS" id="PR00759">
    <property type="entry name" value="BASICPTASE"/>
</dbReference>
<dbReference type="SMART" id="SM00131">
    <property type="entry name" value="KU"/>
    <property type="match status" value="1"/>
</dbReference>
<dbReference type="SUPFAM" id="SSF57362">
    <property type="entry name" value="BPTI-like"/>
    <property type="match status" value="1"/>
</dbReference>
<dbReference type="PROSITE" id="PS00280">
    <property type="entry name" value="BPTI_KUNITZ_1"/>
    <property type="match status" value="1"/>
</dbReference>
<dbReference type="PROSITE" id="PS50279">
    <property type="entry name" value="BPTI_KUNITZ_2"/>
    <property type="match status" value="1"/>
</dbReference>
<organism>
    <name type="scientific">Actinia equina</name>
    <name type="common">Beadlet anemone</name>
    <dbReference type="NCBI Taxonomy" id="6106"/>
    <lineage>
        <taxon>Eukaryota</taxon>
        <taxon>Metazoa</taxon>
        <taxon>Cnidaria</taxon>
        <taxon>Anthozoa</taxon>
        <taxon>Hexacorallia</taxon>
        <taxon>Actiniaria</taxon>
        <taxon>Actiniidae</taxon>
        <taxon>Actinia</taxon>
    </lineage>
</organism>
<name>VKT3A_ACTEQ</name>
<keyword id="KW-0903">Direct protein sequencing</keyword>
<keyword id="KW-1015">Disulfide bond</keyword>
<keyword id="KW-0872">Ion channel impairing toxin</keyword>
<keyword id="KW-0166">Nematocyst</keyword>
<keyword id="KW-0632">Potassium channel impairing toxin</keyword>
<keyword id="KW-0646">Protease inhibitor</keyword>
<keyword id="KW-0964">Secreted</keyword>
<keyword id="KW-0722">Serine protease inhibitor</keyword>
<keyword id="KW-0800">Toxin</keyword>
<comment type="function">
    <text evidence="1">Dual-function toxin that inhibits both the serine protease trypsin and voltage-gated potassium channels (Kv).</text>
</comment>
<comment type="subcellular location">
    <subcellularLocation>
        <location evidence="5">Secreted</location>
    </subcellularLocation>
    <subcellularLocation>
        <location evidence="5">Nematocyst</location>
    </subcellularLocation>
</comment>
<comment type="similarity">
    <text evidence="5">Belongs to the venom Kunitz-type family. Sea anemone type 2 potassium channel toxin subfamily.</text>
</comment>
<reference key="1">
    <citation type="journal article" date="1997" name="Fish. Sci.">
        <title>Amino acid sequences of Kunitz-type protease inhibitors from the sea anemone Actinia equina.</title>
        <authorList>
            <person name="Ishida M."/>
            <person name="Minagawa S."/>
            <person name="Miyauchi K."/>
            <person name="Shimakura K."/>
            <person name="Nagashima Y."/>
            <person name="Shiomi K."/>
        </authorList>
    </citation>
    <scope>PROTEIN SEQUENCE</scope>
</reference>
<reference key="2">
    <citation type="journal article" date="2012" name="Toxicon">
        <title>Development of a rational nomenclature for naming peptide and protein toxins from sea anemones.</title>
        <authorList>
            <person name="Oliveira J.S."/>
            <person name="Fuentes-Silva D."/>
            <person name="King G.F."/>
        </authorList>
    </citation>
    <scope>NOMENCLATURE</scope>
</reference>
<proteinExistence type="evidence at protein level"/>
<evidence type="ECO:0000250" key="1">
    <source>
        <dbReference type="UniProtKB" id="B1B5I8"/>
    </source>
</evidence>
<evidence type="ECO:0000255" key="2">
    <source>
        <dbReference type="PROSITE-ProRule" id="PRU00031"/>
    </source>
</evidence>
<evidence type="ECO:0000303" key="3">
    <source>
    </source>
</evidence>
<evidence type="ECO:0000303" key="4">
    <source ref="1"/>
</evidence>
<evidence type="ECO:0000305" key="5"/>
<accession>P0DMW6</accession>
<feature type="chain" id="PRO_0000433570" description="PI-actitoxin-Aeq3a">
    <location>
        <begin position="1"/>
        <end position="59"/>
    </location>
</feature>
<feature type="domain" description="BPTI/Kunitz inhibitor" evidence="2">
    <location>
        <begin position="6"/>
        <end position="56"/>
    </location>
</feature>
<feature type="disulfide bond" evidence="2">
    <location>
        <begin position="6"/>
        <end position="56"/>
    </location>
</feature>
<feature type="disulfide bond" evidence="2">
    <location>
        <begin position="15"/>
        <end position="39"/>
    </location>
</feature>
<feature type="disulfide bond" evidence="2">
    <location>
        <begin position="31"/>
        <end position="52"/>
    </location>
</feature>
<protein>
    <recommendedName>
        <fullName evidence="3">PI-actitoxin-Aeq3a</fullName>
        <shortName evidence="3">PI-AITX-Aeq3a</shortName>
    </recommendedName>
    <alternativeName>
        <fullName evidence="4">Kunitz-type proteinase inhibitor AEPI-I</fullName>
    </alternativeName>
</protein>
<sequence>DANSFCQLPAVVGKCRGYFPRYYYNTEAGKCQQFIYGGCGGNRNNFETVEDCRATCHSH</sequence>